<protein>
    <recommendedName>
        <fullName evidence="1">D-tagatose-1,6-bisphosphate aldolase subunit KbaY</fullName>
        <shortName evidence="1">TBPA</shortName>
        <shortName evidence="1">TagBP aldolase</shortName>
        <ecNumber evidence="1">4.1.2.40</ecNumber>
    </recommendedName>
    <alternativeName>
        <fullName evidence="1">D-tagatose-bisphosphate aldolase class II</fullName>
    </alternativeName>
    <alternativeName>
        <fullName evidence="1">Ketose 1,6-bisphosphate aldolase class II</fullName>
    </alternativeName>
    <alternativeName>
        <fullName evidence="1">Tagatose-bisphosphate aldolase</fullName>
    </alternativeName>
</protein>
<comment type="function">
    <text evidence="1">Catalytic subunit of the tagatose-1,6-bisphosphate aldolase KbaYZ, which catalyzes the reversible aldol condensation of dihydroxyacetone phosphate (DHAP or glycerone-phosphate) with glyceraldehyde 3-phosphate (G3P) to produce tagatose 1,6-bisphosphate (TBP). Requires KbaZ subunit for full activity and stability.</text>
</comment>
<comment type="catalytic activity">
    <reaction evidence="1">
        <text>D-tagatofuranose 1,6-bisphosphate = D-glyceraldehyde 3-phosphate + dihydroxyacetone phosphate</text>
        <dbReference type="Rhea" id="RHEA:22948"/>
        <dbReference type="ChEBI" id="CHEBI:57642"/>
        <dbReference type="ChEBI" id="CHEBI:58694"/>
        <dbReference type="ChEBI" id="CHEBI:59776"/>
        <dbReference type="EC" id="4.1.2.40"/>
    </reaction>
</comment>
<comment type="cofactor">
    <cofactor evidence="1">
        <name>Zn(2+)</name>
        <dbReference type="ChEBI" id="CHEBI:29105"/>
    </cofactor>
    <text evidence="1">Binds 1 zinc ion per subunit.</text>
</comment>
<comment type="pathway">
    <text evidence="1">Carbohydrate metabolism; D-tagatose 6-phosphate degradation; D-glyceraldehyde 3-phosphate and glycerone phosphate from D-tagatose 6-phosphate: step 2/2.</text>
</comment>
<comment type="subunit">
    <text evidence="1">Homotetramer. Forms a complex with KbaZ.</text>
</comment>
<comment type="similarity">
    <text evidence="1">Belongs to the class II fructose-bisphosphate aldolase family. TagBP aldolase KbaY subfamily.</text>
</comment>
<dbReference type="EC" id="4.1.2.40" evidence="1"/>
<dbReference type="EMBL" id="CP000880">
    <property type="protein sequence ID" value="ABX24140.1"/>
    <property type="molecule type" value="Genomic_DNA"/>
</dbReference>
<dbReference type="SMR" id="A9MPP7"/>
<dbReference type="STRING" id="41514.SARI_04361"/>
<dbReference type="KEGG" id="ses:SARI_04361"/>
<dbReference type="HOGENOM" id="CLU_040088_0_1_6"/>
<dbReference type="UniPathway" id="UPA00704">
    <property type="reaction ID" value="UER00716"/>
</dbReference>
<dbReference type="Proteomes" id="UP000002084">
    <property type="component" value="Chromosome"/>
</dbReference>
<dbReference type="GO" id="GO:0005829">
    <property type="term" value="C:cytosol"/>
    <property type="evidence" value="ECO:0007669"/>
    <property type="project" value="TreeGrafter"/>
</dbReference>
<dbReference type="GO" id="GO:0009025">
    <property type="term" value="F:tagatose-bisphosphate aldolase activity"/>
    <property type="evidence" value="ECO:0007669"/>
    <property type="project" value="UniProtKB-UniRule"/>
</dbReference>
<dbReference type="GO" id="GO:0008270">
    <property type="term" value="F:zinc ion binding"/>
    <property type="evidence" value="ECO:0007669"/>
    <property type="project" value="UniProtKB-UniRule"/>
</dbReference>
<dbReference type="GO" id="GO:0005975">
    <property type="term" value="P:carbohydrate metabolic process"/>
    <property type="evidence" value="ECO:0007669"/>
    <property type="project" value="InterPro"/>
</dbReference>
<dbReference type="GO" id="GO:2001059">
    <property type="term" value="P:D-tagatose 6-phosphate catabolic process"/>
    <property type="evidence" value="ECO:0007669"/>
    <property type="project" value="UniProtKB-UniRule"/>
</dbReference>
<dbReference type="CDD" id="cd00947">
    <property type="entry name" value="TBP_aldolase_IIB"/>
    <property type="match status" value="1"/>
</dbReference>
<dbReference type="FunFam" id="3.20.20.70:FF:000043">
    <property type="entry name" value="D-tagatose-1,6-bisphosphate aldolase subunit GatY"/>
    <property type="match status" value="1"/>
</dbReference>
<dbReference type="Gene3D" id="3.20.20.70">
    <property type="entry name" value="Aldolase class I"/>
    <property type="match status" value="1"/>
</dbReference>
<dbReference type="HAMAP" id="MF_01293">
    <property type="entry name" value="TagBP_aldolase_KbaY"/>
    <property type="match status" value="1"/>
</dbReference>
<dbReference type="InterPro" id="IPR013785">
    <property type="entry name" value="Aldolase_TIM"/>
</dbReference>
<dbReference type="InterPro" id="IPR050246">
    <property type="entry name" value="Class_II_FBP_aldolase"/>
</dbReference>
<dbReference type="InterPro" id="IPR000771">
    <property type="entry name" value="FBA_II"/>
</dbReference>
<dbReference type="InterPro" id="IPR023788">
    <property type="entry name" value="TagBP_ald_KbaY"/>
</dbReference>
<dbReference type="InterPro" id="IPR011288">
    <property type="entry name" value="TagBP_ald_KbaY/GatY"/>
</dbReference>
<dbReference type="NCBIfam" id="TIGR00167">
    <property type="entry name" value="cbbA"/>
    <property type="match status" value="1"/>
</dbReference>
<dbReference type="NCBIfam" id="NF006626">
    <property type="entry name" value="PRK09195.1"/>
    <property type="match status" value="1"/>
</dbReference>
<dbReference type="NCBIfam" id="NF009374">
    <property type="entry name" value="PRK12737.1"/>
    <property type="match status" value="1"/>
</dbReference>
<dbReference type="NCBIfam" id="NF009375">
    <property type="entry name" value="PRK12738.1"/>
    <property type="match status" value="1"/>
</dbReference>
<dbReference type="NCBIfam" id="TIGR01858">
    <property type="entry name" value="tag_bisphos_ald"/>
    <property type="match status" value="1"/>
</dbReference>
<dbReference type="PANTHER" id="PTHR30304">
    <property type="entry name" value="D-TAGATOSE-1,6-BISPHOSPHATE ALDOLASE"/>
    <property type="match status" value="1"/>
</dbReference>
<dbReference type="PANTHER" id="PTHR30304:SF0">
    <property type="entry name" value="D-TAGATOSE-1,6-BISPHOSPHATE ALDOLASE SUBUNIT GATY-RELATED"/>
    <property type="match status" value="1"/>
</dbReference>
<dbReference type="Pfam" id="PF01116">
    <property type="entry name" value="F_bP_aldolase"/>
    <property type="match status" value="1"/>
</dbReference>
<dbReference type="PIRSF" id="PIRSF001359">
    <property type="entry name" value="F_bP_aldolase_II"/>
    <property type="match status" value="1"/>
</dbReference>
<dbReference type="SUPFAM" id="SSF51569">
    <property type="entry name" value="Aldolase"/>
    <property type="match status" value="1"/>
</dbReference>
<dbReference type="PROSITE" id="PS00602">
    <property type="entry name" value="ALDOLASE_CLASS_II_1"/>
    <property type="match status" value="1"/>
</dbReference>
<dbReference type="PROSITE" id="PS00806">
    <property type="entry name" value="ALDOLASE_CLASS_II_2"/>
    <property type="match status" value="1"/>
</dbReference>
<organism>
    <name type="scientific">Salmonella arizonae (strain ATCC BAA-731 / CDC346-86 / RSK2980)</name>
    <dbReference type="NCBI Taxonomy" id="41514"/>
    <lineage>
        <taxon>Bacteria</taxon>
        <taxon>Pseudomonadati</taxon>
        <taxon>Pseudomonadota</taxon>
        <taxon>Gammaproteobacteria</taxon>
        <taxon>Enterobacterales</taxon>
        <taxon>Enterobacteriaceae</taxon>
        <taxon>Salmonella</taxon>
    </lineage>
</organism>
<proteinExistence type="inferred from homology"/>
<accession>A9MPP7</accession>
<feature type="chain" id="PRO_0000355329" description="D-tagatose-1,6-bisphosphate aldolase subunit KbaY">
    <location>
        <begin position="1"/>
        <end position="290"/>
    </location>
</feature>
<feature type="active site" description="Proton donor" evidence="1">
    <location>
        <position position="82"/>
    </location>
</feature>
<feature type="binding site" evidence="1">
    <location>
        <position position="83"/>
    </location>
    <ligand>
        <name>Zn(2+)</name>
        <dbReference type="ChEBI" id="CHEBI:29105"/>
        <note>catalytic</note>
    </ligand>
</feature>
<feature type="binding site" evidence="1">
    <location>
        <position position="180"/>
    </location>
    <ligand>
        <name>Zn(2+)</name>
        <dbReference type="ChEBI" id="CHEBI:29105"/>
        <note>catalytic</note>
    </ligand>
</feature>
<feature type="binding site" evidence="1">
    <location>
        <position position="181"/>
    </location>
    <ligand>
        <name>dihydroxyacetone phosphate</name>
        <dbReference type="ChEBI" id="CHEBI:57642"/>
    </ligand>
</feature>
<feature type="binding site" evidence="1">
    <location>
        <position position="208"/>
    </location>
    <ligand>
        <name>Zn(2+)</name>
        <dbReference type="ChEBI" id="CHEBI:29105"/>
        <note>catalytic</note>
    </ligand>
</feature>
<feature type="binding site" evidence="1">
    <location>
        <begin position="209"/>
        <end position="211"/>
    </location>
    <ligand>
        <name>dihydroxyacetone phosphate</name>
        <dbReference type="ChEBI" id="CHEBI:57642"/>
    </ligand>
</feature>
<feature type="binding site" evidence="1">
    <location>
        <begin position="230"/>
        <end position="233"/>
    </location>
    <ligand>
        <name>dihydroxyacetone phosphate</name>
        <dbReference type="ChEBI" id="CHEBI:57642"/>
    </ligand>
</feature>
<sequence>MSIISTKYLLQDAQEKGYAVPAFNIHNAETIQAILEVCREMKSPVILAGTPGTFKHIALEEIYALCSAYSTSFDIPLALHLDHHESLDDIRHKVNAGVRSAMIDGSHFPFEENVKLVKSVVDFCHSRDCSVEAELGRLGGVEDDMSVDAENAFLTDPQEAKRFVELTGVDSLAVAIGTAHGLYTKKPKIDFQRLAEIREVVDIPLVLHGASDVPDEYVRRTIELGVCKVNVATELKIAFAAAVKKWFIENPDGNDPRYYMRVGMNAMKEVVRSKITVCNSYGKLLPALQY</sequence>
<name>KBAY_SALAR</name>
<evidence type="ECO:0000255" key="1">
    <source>
        <dbReference type="HAMAP-Rule" id="MF_01293"/>
    </source>
</evidence>
<gene>
    <name evidence="1" type="primary">kbaY</name>
    <name type="ordered locus">SARI_04361</name>
</gene>
<reference key="1">
    <citation type="submission" date="2007-11" db="EMBL/GenBank/DDBJ databases">
        <authorList>
            <consortium name="The Salmonella enterica serovar Arizonae Genome Sequencing Project"/>
            <person name="McClelland M."/>
            <person name="Sanderson E.K."/>
            <person name="Porwollik S."/>
            <person name="Spieth J."/>
            <person name="Clifton W.S."/>
            <person name="Fulton R."/>
            <person name="Chunyan W."/>
            <person name="Wollam A."/>
            <person name="Shah N."/>
            <person name="Pepin K."/>
            <person name="Bhonagiri V."/>
            <person name="Nash W."/>
            <person name="Johnson M."/>
            <person name="Thiruvilangam P."/>
            <person name="Wilson R."/>
        </authorList>
    </citation>
    <scope>NUCLEOTIDE SEQUENCE [LARGE SCALE GENOMIC DNA]</scope>
    <source>
        <strain>ATCC BAA-731 / CDC346-86 / RSK2980</strain>
    </source>
</reference>
<keyword id="KW-0456">Lyase</keyword>
<keyword id="KW-0479">Metal-binding</keyword>
<keyword id="KW-1185">Reference proteome</keyword>
<keyword id="KW-0862">Zinc</keyword>